<feature type="chain" id="PRO_1000004562" description="Translation initiation factor IF-3">
    <location>
        <begin position="1"/>
        <end position="183"/>
    </location>
</feature>
<comment type="function">
    <text evidence="1">IF-3 binds to the 30S ribosomal subunit and shifts the equilibrium between 70S ribosomes and their 50S and 30S subunits in favor of the free subunits, thus enhancing the availability of 30S subunits on which protein synthesis initiation begins.</text>
</comment>
<comment type="subunit">
    <text evidence="1">Monomer.</text>
</comment>
<comment type="subcellular location">
    <subcellularLocation>
        <location evidence="1">Cytoplasm</location>
    </subcellularLocation>
</comment>
<comment type="similarity">
    <text evidence="1">Belongs to the IF-3 family.</text>
</comment>
<dbReference type="EMBL" id="CP000712">
    <property type="protein sequence ID" value="ABQ79350.1"/>
    <property type="molecule type" value="Genomic_DNA"/>
</dbReference>
<dbReference type="SMR" id="A5W5E0"/>
<dbReference type="KEGG" id="ppf:Pput_3224"/>
<dbReference type="eggNOG" id="COG0290">
    <property type="taxonomic scope" value="Bacteria"/>
</dbReference>
<dbReference type="HOGENOM" id="CLU_054919_3_2_6"/>
<dbReference type="GO" id="GO:0005829">
    <property type="term" value="C:cytosol"/>
    <property type="evidence" value="ECO:0007669"/>
    <property type="project" value="TreeGrafter"/>
</dbReference>
<dbReference type="GO" id="GO:0016020">
    <property type="term" value="C:membrane"/>
    <property type="evidence" value="ECO:0007669"/>
    <property type="project" value="TreeGrafter"/>
</dbReference>
<dbReference type="GO" id="GO:0043022">
    <property type="term" value="F:ribosome binding"/>
    <property type="evidence" value="ECO:0007669"/>
    <property type="project" value="TreeGrafter"/>
</dbReference>
<dbReference type="GO" id="GO:0003743">
    <property type="term" value="F:translation initiation factor activity"/>
    <property type="evidence" value="ECO:0007669"/>
    <property type="project" value="UniProtKB-UniRule"/>
</dbReference>
<dbReference type="GO" id="GO:0032790">
    <property type="term" value="P:ribosome disassembly"/>
    <property type="evidence" value="ECO:0007669"/>
    <property type="project" value="TreeGrafter"/>
</dbReference>
<dbReference type="FunFam" id="3.10.20.80:FF:000001">
    <property type="entry name" value="Translation initiation factor IF-3"/>
    <property type="match status" value="1"/>
</dbReference>
<dbReference type="FunFam" id="3.30.110.10:FF:000001">
    <property type="entry name" value="Translation initiation factor IF-3"/>
    <property type="match status" value="1"/>
</dbReference>
<dbReference type="Gene3D" id="3.30.110.10">
    <property type="entry name" value="Translation initiation factor 3 (IF-3), C-terminal domain"/>
    <property type="match status" value="1"/>
</dbReference>
<dbReference type="Gene3D" id="3.10.20.80">
    <property type="entry name" value="Translation initiation factor 3 (IF-3), N-terminal domain"/>
    <property type="match status" value="1"/>
</dbReference>
<dbReference type="HAMAP" id="MF_00080">
    <property type="entry name" value="IF_3"/>
    <property type="match status" value="1"/>
</dbReference>
<dbReference type="InterPro" id="IPR036788">
    <property type="entry name" value="T_IF-3_C_sf"/>
</dbReference>
<dbReference type="InterPro" id="IPR036787">
    <property type="entry name" value="T_IF-3_N_sf"/>
</dbReference>
<dbReference type="InterPro" id="IPR001288">
    <property type="entry name" value="Translation_initiation_fac_3"/>
</dbReference>
<dbReference type="InterPro" id="IPR019815">
    <property type="entry name" value="Translation_initiation_fac_3_C"/>
</dbReference>
<dbReference type="InterPro" id="IPR019814">
    <property type="entry name" value="Translation_initiation_fac_3_N"/>
</dbReference>
<dbReference type="NCBIfam" id="TIGR00168">
    <property type="entry name" value="infC"/>
    <property type="match status" value="1"/>
</dbReference>
<dbReference type="PANTHER" id="PTHR10938">
    <property type="entry name" value="TRANSLATION INITIATION FACTOR IF-3"/>
    <property type="match status" value="1"/>
</dbReference>
<dbReference type="PANTHER" id="PTHR10938:SF0">
    <property type="entry name" value="TRANSLATION INITIATION FACTOR IF-3, MITOCHONDRIAL"/>
    <property type="match status" value="1"/>
</dbReference>
<dbReference type="Pfam" id="PF00707">
    <property type="entry name" value="IF3_C"/>
    <property type="match status" value="1"/>
</dbReference>
<dbReference type="Pfam" id="PF05198">
    <property type="entry name" value="IF3_N"/>
    <property type="match status" value="1"/>
</dbReference>
<dbReference type="SUPFAM" id="SSF55200">
    <property type="entry name" value="Translation initiation factor IF3, C-terminal domain"/>
    <property type="match status" value="1"/>
</dbReference>
<dbReference type="SUPFAM" id="SSF54364">
    <property type="entry name" value="Translation initiation factor IF3, N-terminal domain"/>
    <property type="match status" value="1"/>
</dbReference>
<evidence type="ECO:0000255" key="1">
    <source>
        <dbReference type="HAMAP-Rule" id="MF_00080"/>
    </source>
</evidence>
<sequence>MTIKREMRNDKRAVPKAPINENISAREVRLIGADGEQVGIVSIDEALRIADEAKLDLVEISADAVPPVCKVMDYGKHLFEKKKQANEAKKNQKQIQIKEIKFRPGTEDGDYQVKLRNLVRFLTDGDKAKISLRFRGREMAHQELGMELLKRVEADLAEYGTVEQHPKMEGRQLMMVIAPKKKK</sequence>
<gene>
    <name evidence="1" type="primary">infC</name>
    <name type="ordered locus">Pput_3224</name>
</gene>
<proteinExistence type="inferred from homology"/>
<reference key="1">
    <citation type="submission" date="2007-05" db="EMBL/GenBank/DDBJ databases">
        <title>Complete sequence of Pseudomonas putida F1.</title>
        <authorList>
            <consortium name="US DOE Joint Genome Institute"/>
            <person name="Copeland A."/>
            <person name="Lucas S."/>
            <person name="Lapidus A."/>
            <person name="Barry K."/>
            <person name="Detter J.C."/>
            <person name="Glavina del Rio T."/>
            <person name="Hammon N."/>
            <person name="Israni S."/>
            <person name="Dalin E."/>
            <person name="Tice H."/>
            <person name="Pitluck S."/>
            <person name="Chain P."/>
            <person name="Malfatti S."/>
            <person name="Shin M."/>
            <person name="Vergez L."/>
            <person name="Schmutz J."/>
            <person name="Larimer F."/>
            <person name="Land M."/>
            <person name="Hauser L."/>
            <person name="Kyrpides N."/>
            <person name="Lykidis A."/>
            <person name="Parales R."/>
            <person name="Richardson P."/>
        </authorList>
    </citation>
    <scope>NUCLEOTIDE SEQUENCE [LARGE SCALE GENOMIC DNA]</scope>
    <source>
        <strain>ATCC 700007 / DSM 6899 / JCM 31910 / BCRC 17059 / LMG 24140 / F1</strain>
    </source>
</reference>
<protein>
    <recommendedName>
        <fullName evidence="1">Translation initiation factor IF-3</fullName>
    </recommendedName>
</protein>
<organism>
    <name type="scientific">Pseudomonas putida (strain ATCC 700007 / DSM 6899 / JCM 31910 / BCRC 17059 / LMG 24140 / F1)</name>
    <dbReference type="NCBI Taxonomy" id="351746"/>
    <lineage>
        <taxon>Bacteria</taxon>
        <taxon>Pseudomonadati</taxon>
        <taxon>Pseudomonadota</taxon>
        <taxon>Gammaproteobacteria</taxon>
        <taxon>Pseudomonadales</taxon>
        <taxon>Pseudomonadaceae</taxon>
        <taxon>Pseudomonas</taxon>
    </lineage>
</organism>
<accession>A5W5E0</accession>
<keyword id="KW-0963">Cytoplasm</keyword>
<keyword id="KW-0396">Initiation factor</keyword>
<keyword id="KW-0648">Protein biosynthesis</keyword>
<name>IF3_PSEP1</name>